<name>UPP_CORGL</name>
<comment type="function">
    <text evidence="1">Catalyzes the conversion of uracil and 5-phospho-alpha-D-ribose 1-diphosphate (PRPP) to UMP and diphosphate.</text>
</comment>
<comment type="catalytic activity">
    <reaction evidence="1">
        <text>UMP + diphosphate = 5-phospho-alpha-D-ribose 1-diphosphate + uracil</text>
        <dbReference type="Rhea" id="RHEA:13017"/>
        <dbReference type="ChEBI" id="CHEBI:17568"/>
        <dbReference type="ChEBI" id="CHEBI:33019"/>
        <dbReference type="ChEBI" id="CHEBI:57865"/>
        <dbReference type="ChEBI" id="CHEBI:58017"/>
        <dbReference type="EC" id="2.4.2.9"/>
    </reaction>
</comment>
<comment type="cofactor">
    <cofactor evidence="1">
        <name>Mg(2+)</name>
        <dbReference type="ChEBI" id="CHEBI:18420"/>
    </cofactor>
    <text evidence="1">Binds 1 Mg(2+) ion per subunit. The magnesium is bound as Mg-PRPP.</text>
</comment>
<comment type="activity regulation">
    <text evidence="1">Allosterically activated by GTP.</text>
</comment>
<comment type="pathway">
    <text evidence="1">Pyrimidine metabolism; UMP biosynthesis via salvage pathway; UMP from uracil: step 1/1.</text>
</comment>
<comment type="similarity">
    <text evidence="1">Belongs to the UPRTase family.</text>
</comment>
<proteinExistence type="inferred from homology"/>
<sequence length="211" mass="22523">MDITIVNHPLVASRLTLLRDERSDNAAFRAAANDLGAMLIYEASRDLEVEHFDTKTPVAMAEGTRLKQPPIIVPIIRAGLGMIDPALSMIPDAQVGFIGLARDEETHEPVPYLEALPQDLSNQPVFLVDPMLATGGSLLHAIRLLADRGATDITAICMVSAQPGVDALAESGLPVRLVTATIDPGLDENAYIVPGLGDAGDRLYGPRNIDL</sequence>
<feature type="chain" id="PRO_0000120820" description="Uracil phosphoribosyltransferase">
    <location>
        <begin position="1"/>
        <end position="211"/>
    </location>
</feature>
<feature type="binding site" evidence="1">
    <location>
        <position position="77"/>
    </location>
    <ligand>
        <name>5-phospho-alpha-D-ribose 1-diphosphate</name>
        <dbReference type="ChEBI" id="CHEBI:58017"/>
    </ligand>
</feature>
<feature type="binding site" evidence="1">
    <location>
        <position position="102"/>
    </location>
    <ligand>
        <name>5-phospho-alpha-D-ribose 1-diphosphate</name>
        <dbReference type="ChEBI" id="CHEBI:58017"/>
    </ligand>
</feature>
<feature type="binding site" evidence="1">
    <location>
        <begin position="129"/>
        <end position="137"/>
    </location>
    <ligand>
        <name>5-phospho-alpha-D-ribose 1-diphosphate</name>
        <dbReference type="ChEBI" id="CHEBI:58017"/>
    </ligand>
</feature>
<feature type="binding site" evidence="1">
    <location>
        <position position="192"/>
    </location>
    <ligand>
        <name>uracil</name>
        <dbReference type="ChEBI" id="CHEBI:17568"/>
    </ligand>
</feature>
<feature type="binding site" evidence="1">
    <location>
        <begin position="197"/>
        <end position="199"/>
    </location>
    <ligand>
        <name>uracil</name>
        <dbReference type="ChEBI" id="CHEBI:17568"/>
    </ligand>
</feature>
<feature type="binding site" evidence="1">
    <location>
        <position position="198"/>
    </location>
    <ligand>
        <name>5-phospho-alpha-D-ribose 1-diphosphate</name>
        <dbReference type="ChEBI" id="CHEBI:58017"/>
    </ligand>
</feature>
<gene>
    <name evidence="1" type="primary">upp</name>
    <name type="ordered locus">Cgl0684</name>
    <name type="ordered locus">cg0786</name>
</gene>
<organism>
    <name type="scientific">Corynebacterium glutamicum (strain ATCC 13032 / DSM 20300 / JCM 1318 / BCRC 11384 / CCUG 27702 / LMG 3730 / NBRC 12168 / NCIMB 10025 / NRRL B-2784 / 534)</name>
    <dbReference type="NCBI Taxonomy" id="196627"/>
    <lineage>
        <taxon>Bacteria</taxon>
        <taxon>Bacillati</taxon>
        <taxon>Actinomycetota</taxon>
        <taxon>Actinomycetes</taxon>
        <taxon>Mycobacteriales</taxon>
        <taxon>Corynebacteriaceae</taxon>
        <taxon>Corynebacterium</taxon>
    </lineage>
</organism>
<accession>P58998</accession>
<protein>
    <recommendedName>
        <fullName evidence="1">Uracil phosphoribosyltransferase</fullName>
        <ecNumber evidence="1">2.4.2.9</ecNumber>
    </recommendedName>
    <alternativeName>
        <fullName evidence="1">UMP pyrophosphorylase</fullName>
    </alternativeName>
    <alternativeName>
        <fullName evidence="1">UPRTase</fullName>
    </alternativeName>
</protein>
<evidence type="ECO:0000255" key="1">
    <source>
        <dbReference type="HAMAP-Rule" id="MF_01218"/>
    </source>
</evidence>
<reference key="1">
    <citation type="journal article" date="2003" name="Appl. Microbiol. Biotechnol.">
        <title>The Corynebacterium glutamicum genome: features and impacts on biotechnological processes.</title>
        <authorList>
            <person name="Ikeda M."/>
            <person name="Nakagawa S."/>
        </authorList>
    </citation>
    <scope>NUCLEOTIDE SEQUENCE [LARGE SCALE GENOMIC DNA]</scope>
    <source>
        <strain>ATCC 13032 / DSM 20300 / JCM 1318 / BCRC 11384 / CCUG 27702 / LMG 3730 / NBRC 12168 / NCIMB 10025 / NRRL B-2784 / 534</strain>
    </source>
</reference>
<reference key="2">
    <citation type="journal article" date="2003" name="J. Biotechnol.">
        <title>The complete Corynebacterium glutamicum ATCC 13032 genome sequence and its impact on the production of L-aspartate-derived amino acids and vitamins.</title>
        <authorList>
            <person name="Kalinowski J."/>
            <person name="Bathe B."/>
            <person name="Bartels D."/>
            <person name="Bischoff N."/>
            <person name="Bott M."/>
            <person name="Burkovski A."/>
            <person name="Dusch N."/>
            <person name="Eggeling L."/>
            <person name="Eikmanns B.J."/>
            <person name="Gaigalat L."/>
            <person name="Goesmann A."/>
            <person name="Hartmann M."/>
            <person name="Huthmacher K."/>
            <person name="Kraemer R."/>
            <person name="Linke B."/>
            <person name="McHardy A.C."/>
            <person name="Meyer F."/>
            <person name="Moeckel B."/>
            <person name="Pfefferle W."/>
            <person name="Puehler A."/>
            <person name="Rey D.A."/>
            <person name="Rueckert C."/>
            <person name="Rupp O."/>
            <person name="Sahm H."/>
            <person name="Wendisch V.F."/>
            <person name="Wiegraebe I."/>
            <person name="Tauch A."/>
        </authorList>
    </citation>
    <scope>NUCLEOTIDE SEQUENCE [LARGE SCALE GENOMIC DNA]</scope>
    <source>
        <strain>ATCC 13032 / DSM 20300 / JCM 1318 / BCRC 11384 / CCUG 27702 / LMG 3730 / NBRC 12168 / NCIMB 10025 / NRRL B-2784 / 534</strain>
    </source>
</reference>
<keyword id="KW-0021">Allosteric enzyme</keyword>
<keyword id="KW-0328">Glycosyltransferase</keyword>
<keyword id="KW-0342">GTP-binding</keyword>
<keyword id="KW-0460">Magnesium</keyword>
<keyword id="KW-0547">Nucleotide-binding</keyword>
<keyword id="KW-1185">Reference proteome</keyword>
<keyword id="KW-0808">Transferase</keyword>
<dbReference type="EC" id="2.4.2.9" evidence="1"/>
<dbReference type="EMBL" id="BA000036">
    <property type="protein sequence ID" value="BAB98077.1"/>
    <property type="molecule type" value="Genomic_DNA"/>
</dbReference>
<dbReference type="EMBL" id="BX927150">
    <property type="protein sequence ID" value="CAF19389.1"/>
    <property type="molecule type" value="Genomic_DNA"/>
</dbReference>
<dbReference type="RefSeq" id="NP_599916.1">
    <property type="nucleotide sequence ID" value="NC_003450.3"/>
</dbReference>
<dbReference type="RefSeq" id="WP_003858289.1">
    <property type="nucleotide sequence ID" value="NC_006958.1"/>
</dbReference>
<dbReference type="SMR" id="P58998"/>
<dbReference type="STRING" id="196627.cg0786"/>
<dbReference type="GeneID" id="1018683"/>
<dbReference type="KEGG" id="cgb:cg0786"/>
<dbReference type="KEGG" id="cgl:Cgl0684"/>
<dbReference type="PATRIC" id="fig|196627.13.peg.670"/>
<dbReference type="eggNOG" id="COG0035">
    <property type="taxonomic scope" value="Bacteria"/>
</dbReference>
<dbReference type="HOGENOM" id="CLU_067096_2_3_11"/>
<dbReference type="OrthoDB" id="9781675at2"/>
<dbReference type="BioCyc" id="CORYNE:G18NG-10246-MONOMER"/>
<dbReference type="UniPathway" id="UPA00574">
    <property type="reaction ID" value="UER00636"/>
</dbReference>
<dbReference type="Proteomes" id="UP000000582">
    <property type="component" value="Chromosome"/>
</dbReference>
<dbReference type="Proteomes" id="UP000001009">
    <property type="component" value="Chromosome"/>
</dbReference>
<dbReference type="GO" id="GO:0005525">
    <property type="term" value="F:GTP binding"/>
    <property type="evidence" value="ECO:0007669"/>
    <property type="project" value="UniProtKB-KW"/>
</dbReference>
<dbReference type="GO" id="GO:0000287">
    <property type="term" value="F:magnesium ion binding"/>
    <property type="evidence" value="ECO:0007669"/>
    <property type="project" value="UniProtKB-UniRule"/>
</dbReference>
<dbReference type="GO" id="GO:0004845">
    <property type="term" value="F:uracil phosphoribosyltransferase activity"/>
    <property type="evidence" value="ECO:0007669"/>
    <property type="project" value="UniProtKB-UniRule"/>
</dbReference>
<dbReference type="GO" id="GO:0044206">
    <property type="term" value="P:UMP salvage"/>
    <property type="evidence" value="ECO:0007669"/>
    <property type="project" value="UniProtKB-UniRule"/>
</dbReference>
<dbReference type="GO" id="GO:0006223">
    <property type="term" value="P:uracil salvage"/>
    <property type="evidence" value="ECO:0007669"/>
    <property type="project" value="InterPro"/>
</dbReference>
<dbReference type="CDD" id="cd06223">
    <property type="entry name" value="PRTases_typeI"/>
    <property type="match status" value="1"/>
</dbReference>
<dbReference type="FunFam" id="3.40.50.2020:FF:000003">
    <property type="entry name" value="Uracil phosphoribosyltransferase"/>
    <property type="match status" value="1"/>
</dbReference>
<dbReference type="Gene3D" id="3.40.50.2020">
    <property type="match status" value="1"/>
</dbReference>
<dbReference type="HAMAP" id="MF_01218_B">
    <property type="entry name" value="Upp_B"/>
    <property type="match status" value="1"/>
</dbReference>
<dbReference type="InterPro" id="IPR000836">
    <property type="entry name" value="PRibTrfase_dom"/>
</dbReference>
<dbReference type="InterPro" id="IPR029057">
    <property type="entry name" value="PRTase-like"/>
</dbReference>
<dbReference type="InterPro" id="IPR034332">
    <property type="entry name" value="Upp_B"/>
</dbReference>
<dbReference type="InterPro" id="IPR050054">
    <property type="entry name" value="UPRTase/APRTase"/>
</dbReference>
<dbReference type="InterPro" id="IPR005765">
    <property type="entry name" value="Ura_phspho_trans"/>
</dbReference>
<dbReference type="NCBIfam" id="NF001097">
    <property type="entry name" value="PRK00129.1"/>
    <property type="match status" value="1"/>
</dbReference>
<dbReference type="NCBIfam" id="TIGR01091">
    <property type="entry name" value="upp"/>
    <property type="match status" value="1"/>
</dbReference>
<dbReference type="PANTHER" id="PTHR32315">
    <property type="entry name" value="ADENINE PHOSPHORIBOSYLTRANSFERASE"/>
    <property type="match status" value="1"/>
</dbReference>
<dbReference type="PANTHER" id="PTHR32315:SF4">
    <property type="entry name" value="URACIL PHOSPHORIBOSYLTRANSFERASE, CHLOROPLASTIC"/>
    <property type="match status" value="1"/>
</dbReference>
<dbReference type="Pfam" id="PF14681">
    <property type="entry name" value="UPRTase"/>
    <property type="match status" value="1"/>
</dbReference>
<dbReference type="SUPFAM" id="SSF53271">
    <property type="entry name" value="PRTase-like"/>
    <property type="match status" value="1"/>
</dbReference>